<organism>
    <name type="scientific">Escherichia coli (strain SMS-3-5 / SECEC)</name>
    <dbReference type="NCBI Taxonomy" id="439855"/>
    <lineage>
        <taxon>Bacteria</taxon>
        <taxon>Pseudomonadati</taxon>
        <taxon>Pseudomonadota</taxon>
        <taxon>Gammaproteobacteria</taxon>
        <taxon>Enterobacterales</taxon>
        <taxon>Enterobacteriaceae</taxon>
        <taxon>Escherichia</taxon>
    </lineage>
</organism>
<comment type="function">
    <text evidence="1">Catalyzes the attachment of serine to tRNA(Ser). Is also able to aminoacylate tRNA(Sec) with serine, to form the misacylated tRNA L-seryl-tRNA(Sec), which will be further converted into selenocysteinyl-tRNA(Sec).</text>
</comment>
<comment type="catalytic activity">
    <reaction evidence="1">
        <text>tRNA(Ser) + L-serine + ATP = L-seryl-tRNA(Ser) + AMP + diphosphate + H(+)</text>
        <dbReference type="Rhea" id="RHEA:12292"/>
        <dbReference type="Rhea" id="RHEA-COMP:9669"/>
        <dbReference type="Rhea" id="RHEA-COMP:9703"/>
        <dbReference type="ChEBI" id="CHEBI:15378"/>
        <dbReference type="ChEBI" id="CHEBI:30616"/>
        <dbReference type="ChEBI" id="CHEBI:33019"/>
        <dbReference type="ChEBI" id="CHEBI:33384"/>
        <dbReference type="ChEBI" id="CHEBI:78442"/>
        <dbReference type="ChEBI" id="CHEBI:78533"/>
        <dbReference type="ChEBI" id="CHEBI:456215"/>
        <dbReference type="EC" id="6.1.1.11"/>
    </reaction>
</comment>
<comment type="catalytic activity">
    <reaction evidence="1">
        <text>tRNA(Sec) + L-serine + ATP = L-seryl-tRNA(Sec) + AMP + diphosphate + H(+)</text>
        <dbReference type="Rhea" id="RHEA:42580"/>
        <dbReference type="Rhea" id="RHEA-COMP:9742"/>
        <dbReference type="Rhea" id="RHEA-COMP:10128"/>
        <dbReference type="ChEBI" id="CHEBI:15378"/>
        <dbReference type="ChEBI" id="CHEBI:30616"/>
        <dbReference type="ChEBI" id="CHEBI:33019"/>
        <dbReference type="ChEBI" id="CHEBI:33384"/>
        <dbReference type="ChEBI" id="CHEBI:78442"/>
        <dbReference type="ChEBI" id="CHEBI:78533"/>
        <dbReference type="ChEBI" id="CHEBI:456215"/>
        <dbReference type="EC" id="6.1.1.11"/>
    </reaction>
</comment>
<comment type="pathway">
    <text evidence="1">Aminoacyl-tRNA biosynthesis; selenocysteinyl-tRNA(Sec) biosynthesis; L-seryl-tRNA(Sec) from L-serine and tRNA(Sec): step 1/1.</text>
</comment>
<comment type="subunit">
    <text evidence="1">Homodimer. The tRNA molecule binds across the dimer.</text>
</comment>
<comment type="subcellular location">
    <subcellularLocation>
        <location evidence="1">Cytoplasm</location>
    </subcellularLocation>
</comment>
<comment type="domain">
    <text evidence="1">Consists of two distinct domains, a catalytic core and a N-terminal extension that is involved in tRNA binding.</text>
</comment>
<comment type="similarity">
    <text evidence="1">Belongs to the class-II aminoacyl-tRNA synthetase family. Type-1 seryl-tRNA synthetase subfamily.</text>
</comment>
<gene>
    <name evidence="1" type="primary">serS</name>
    <name type="ordered locus">EcSMS35_2227</name>
</gene>
<accession>B1LJX0</accession>
<proteinExistence type="inferred from homology"/>
<sequence>MLDPNLLRNEPDAVAEKLARRGFKLDVDKLGALEERRKVLQVKTENLQAERNSRSKSIGQAKARGEDIEPLRLEVNKLGEELDAAKAELDALQAEIRDIALTIPNLPADEVPVGKDENDNVEVSRWGTPREFDFEVRDHVTLGEMHSGLDFAAAVKLTGSRFVVMKGQIARMHRALSQFMLDLHTEQHGYSENYVPYLVNQDTLYGTGQLPKFAGDLFHTRPLEEEADTSNYALIPTAEVPLTNLVRGEIIDEDDLPIKMTAHTPCFRSEAGSYGRDTRGLIRMHQFDKVEMVQIVRPEDSMAALEEMTGHAEKVLQLLGLPYRKIILCTGDMGFGACKTYDLEVWIPAQNTYREISSCSNVWDFQARRMQARCRSKSDKKTRLVHTLNGSGLAVGRTLVAVMENYQQADGRIEVPEVLRPYMNGLEYIG</sequence>
<reference key="1">
    <citation type="journal article" date="2008" name="J. Bacteriol.">
        <title>Insights into the environmental resistance gene pool from the genome sequence of the multidrug-resistant environmental isolate Escherichia coli SMS-3-5.</title>
        <authorList>
            <person name="Fricke W.F."/>
            <person name="Wright M.S."/>
            <person name="Lindell A.H."/>
            <person name="Harkins D.M."/>
            <person name="Baker-Austin C."/>
            <person name="Ravel J."/>
            <person name="Stepanauskas R."/>
        </authorList>
    </citation>
    <scope>NUCLEOTIDE SEQUENCE [LARGE SCALE GENOMIC DNA]</scope>
    <source>
        <strain>SMS-3-5 / SECEC</strain>
    </source>
</reference>
<name>SYS_ECOSM</name>
<feature type="chain" id="PRO_1000199477" description="Serine--tRNA ligase">
    <location>
        <begin position="1"/>
        <end position="430"/>
    </location>
</feature>
<feature type="binding site" evidence="1">
    <location>
        <begin position="237"/>
        <end position="239"/>
    </location>
    <ligand>
        <name>L-serine</name>
        <dbReference type="ChEBI" id="CHEBI:33384"/>
    </ligand>
</feature>
<feature type="binding site" evidence="1">
    <location>
        <begin position="268"/>
        <end position="270"/>
    </location>
    <ligand>
        <name>ATP</name>
        <dbReference type="ChEBI" id="CHEBI:30616"/>
    </ligand>
</feature>
<feature type="binding site" evidence="1">
    <location>
        <position position="291"/>
    </location>
    <ligand>
        <name>L-serine</name>
        <dbReference type="ChEBI" id="CHEBI:33384"/>
    </ligand>
</feature>
<feature type="binding site" evidence="1">
    <location>
        <begin position="355"/>
        <end position="358"/>
    </location>
    <ligand>
        <name>ATP</name>
        <dbReference type="ChEBI" id="CHEBI:30616"/>
    </ligand>
</feature>
<feature type="binding site" evidence="1">
    <location>
        <position position="391"/>
    </location>
    <ligand>
        <name>L-serine</name>
        <dbReference type="ChEBI" id="CHEBI:33384"/>
    </ligand>
</feature>
<evidence type="ECO:0000255" key="1">
    <source>
        <dbReference type="HAMAP-Rule" id="MF_00176"/>
    </source>
</evidence>
<keyword id="KW-0030">Aminoacyl-tRNA synthetase</keyword>
<keyword id="KW-0067">ATP-binding</keyword>
<keyword id="KW-0963">Cytoplasm</keyword>
<keyword id="KW-0436">Ligase</keyword>
<keyword id="KW-0547">Nucleotide-binding</keyword>
<keyword id="KW-0648">Protein biosynthesis</keyword>
<protein>
    <recommendedName>
        <fullName evidence="1">Serine--tRNA ligase</fullName>
        <ecNumber evidence="1">6.1.1.11</ecNumber>
    </recommendedName>
    <alternativeName>
        <fullName evidence="1">Seryl-tRNA synthetase</fullName>
        <shortName evidence="1">SerRS</shortName>
    </alternativeName>
    <alternativeName>
        <fullName evidence="1">Seryl-tRNA(Ser/Sec) synthetase</fullName>
    </alternativeName>
</protein>
<dbReference type="EC" id="6.1.1.11" evidence="1"/>
<dbReference type="EMBL" id="CP000970">
    <property type="protein sequence ID" value="ACB18911.1"/>
    <property type="molecule type" value="Genomic_DNA"/>
</dbReference>
<dbReference type="RefSeq" id="WP_000886683.1">
    <property type="nucleotide sequence ID" value="NC_010498.1"/>
</dbReference>
<dbReference type="SMR" id="B1LJX0"/>
<dbReference type="GeneID" id="93776527"/>
<dbReference type="KEGG" id="ecm:EcSMS35_2227"/>
<dbReference type="HOGENOM" id="CLU_023797_1_1_6"/>
<dbReference type="UniPathway" id="UPA00906">
    <property type="reaction ID" value="UER00895"/>
</dbReference>
<dbReference type="Proteomes" id="UP000007011">
    <property type="component" value="Chromosome"/>
</dbReference>
<dbReference type="GO" id="GO:0005737">
    <property type="term" value="C:cytoplasm"/>
    <property type="evidence" value="ECO:0007669"/>
    <property type="project" value="UniProtKB-SubCell"/>
</dbReference>
<dbReference type="GO" id="GO:0005524">
    <property type="term" value="F:ATP binding"/>
    <property type="evidence" value="ECO:0007669"/>
    <property type="project" value="UniProtKB-UniRule"/>
</dbReference>
<dbReference type="GO" id="GO:0004828">
    <property type="term" value="F:serine-tRNA ligase activity"/>
    <property type="evidence" value="ECO:0007669"/>
    <property type="project" value="UniProtKB-UniRule"/>
</dbReference>
<dbReference type="GO" id="GO:0016260">
    <property type="term" value="P:selenocysteine biosynthetic process"/>
    <property type="evidence" value="ECO:0007669"/>
    <property type="project" value="UniProtKB-UniRule"/>
</dbReference>
<dbReference type="GO" id="GO:0006434">
    <property type="term" value="P:seryl-tRNA aminoacylation"/>
    <property type="evidence" value="ECO:0007669"/>
    <property type="project" value="UniProtKB-UniRule"/>
</dbReference>
<dbReference type="CDD" id="cd00770">
    <property type="entry name" value="SerRS_core"/>
    <property type="match status" value="1"/>
</dbReference>
<dbReference type="FunFam" id="1.10.287.40:FF:000001">
    <property type="entry name" value="Serine--tRNA ligase"/>
    <property type="match status" value="1"/>
</dbReference>
<dbReference type="FunFam" id="3.30.930.10:FF:000018">
    <property type="entry name" value="Serine--tRNA ligase"/>
    <property type="match status" value="1"/>
</dbReference>
<dbReference type="Gene3D" id="3.30.930.10">
    <property type="entry name" value="Bira Bifunctional Protein, Domain 2"/>
    <property type="match status" value="1"/>
</dbReference>
<dbReference type="Gene3D" id="1.10.287.40">
    <property type="entry name" value="Serine-tRNA synthetase, tRNA binding domain"/>
    <property type="match status" value="1"/>
</dbReference>
<dbReference type="HAMAP" id="MF_00176">
    <property type="entry name" value="Ser_tRNA_synth_type1"/>
    <property type="match status" value="1"/>
</dbReference>
<dbReference type="InterPro" id="IPR002314">
    <property type="entry name" value="aa-tRNA-synt_IIb"/>
</dbReference>
<dbReference type="InterPro" id="IPR006195">
    <property type="entry name" value="aa-tRNA-synth_II"/>
</dbReference>
<dbReference type="InterPro" id="IPR045864">
    <property type="entry name" value="aa-tRNA-synth_II/BPL/LPL"/>
</dbReference>
<dbReference type="InterPro" id="IPR002317">
    <property type="entry name" value="Ser-tRNA-ligase_type_1"/>
</dbReference>
<dbReference type="InterPro" id="IPR015866">
    <property type="entry name" value="Ser-tRNA-synth_1_N"/>
</dbReference>
<dbReference type="InterPro" id="IPR042103">
    <property type="entry name" value="SerRS_1_N_sf"/>
</dbReference>
<dbReference type="InterPro" id="IPR033729">
    <property type="entry name" value="SerRS_core"/>
</dbReference>
<dbReference type="InterPro" id="IPR010978">
    <property type="entry name" value="tRNA-bd_arm"/>
</dbReference>
<dbReference type="NCBIfam" id="TIGR00414">
    <property type="entry name" value="serS"/>
    <property type="match status" value="1"/>
</dbReference>
<dbReference type="PANTHER" id="PTHR43697:SF1">
    <property type="entry name" value="SERINE--TRNA LIGASE"/>
    <property type="match status" value="1"/>
</dbReference>
<dbReference type="PANTHER" id="PTHR43697">
    <property type="entry name" value="SERYL-TRNA SYNTHETASE"/>
    <property type="match status" value="1"/>
</dbReference>
<dbReference type="Pfam" id="PF02403">
    <property type="entry name" value="Seryl_tRNA_N"/>
    <property type="match status" value="1"/>
</dbReference>
<dbReference type="Pfam" id="PF00587">
    <property type="entry name" value="tRNA-synt_2b"/>
    <property type="match status" value="1"/>
</dbReference>
<dbReference type="PIRSF" id="PIRSF001529">
    <property type="entry name" value="Ser-tRNA-synth_IIa"/>
    <property type="match status" value="1"/>
</dbReference>
<dbReference type="PRINTS" id="PR00981">
    <property type="entry name" value="TRNASYNTHSER"/>
</dbReference>
<dbReference type="SUPFAM" id="SSF55681">
    <property type="entry name" value="Class II aaRS and biotin synthetases"/>
    <property type="match status" value="1"/>
</dbReference>
<dbReference type="SUPFAM" id="SSF46589">
    <property type="entry name" value="tRNA-binding arm"/>
    <property type="match status" value="1"/>
</dbReference>
<dbReference type="PROSITE" id="PS50862">
    <property type="entry name" value="AA_TRNA_LIGASE_II"/>
    <property type="match status" value="1"/>
</dbReference>